<comment type="function">
    <text evidence="1">Binds the 23S rRNA.</text>
</comment>
<comment type="subunit">
    <text evidence="1">Part of the 50S ribosomal subunit.</text>
</comment>
<comment type="similarity">
    <text evidence="1">Belongs to the bacterial ribosomal protein bL31 family. Type A subfamily.</text>
</comment>
<dbReference type="EMBL" id="CP001016">
    <property type="protein sequence ID" value="ACB93917.1"/>
    <property type="molecule type" value="Genomic_DNA"/>
</dbReference>
<dbReference type="RefSeq" id="WP_012383275.1">
    <property type="nucleotide sequence ID" value="NC_010581.1"/>
</dbReference>
<dbReference type="SMR" id="B2ICM8"/>
<dbReference type="STRING" id="395963.Bind_0261"/>
<dbReference type="KEGG" id="bid:Bind_0261"/>
<dbReference type="eggNOG" id="COG0254">
    <property type="taxonomic scope" value="Bacteria"/>
</dbReference>
<dbReference type="HOGENOM" id="CLU_114306_3_2_5"/>
<dbReference type="OrthoDB" id="9803251at2"/>
<dbReference type="Proteomes" id="UP000001695">
    <property type="component" value="Chromosome"/>
</dbReference>
<dbReference type="GO" id="GO:1990904">
    <property type="term" value="C:ribonucleoprotein complex"/>
    <property type="evidence" value="ECO:0007669"/>
    <property type="project" value="UniProtKB-KW"/>
</dbReference>
<dbReference type="GO" id="GO:0005840">
    <property type="term" value="C:ribosome"/>
    <property type="evidence" value="ECO:0007669"/>
    <property type="project" value="UniProtKB-KW"/>
</dbReference>
<dbReference type="GO" id="GO:0019843">
    <property type="term" value="F:rRNA binding"/>
    <property type="evidence" value="ECO:0007669"/>
    <property type="project" value="UniProtKB-KW"/>
</dbReference>
<dbReference type="GO" id="GO:0003735">
    <property type="term" value="F:structural constituent of ribosome"/>
    <property type="evidence" value="ECO:0007669"/>
    <property type="project" value="InterPro"/>
</dbReference>
<dbReference type="GO" id="GO:0006412">
    <property type="term" value="P:translation"/>
    <property type="evidence" value="ECO:0007669"/>
    <property type="project" value="UniProtKB-UniRule"/>
</dbReference>
<dbReference type="Gene3D" id="4.10.830.30">
    <property type="entry name" value="Ribosomal protein L31"/>
    <property type="match status" value="1"/>
</dbReference>
<dbReference type="HAMAP" id="MF_00501">
    <property type="entry name" value="Ribosomal_bL31_1"/>
    <property type="match status" value="1"/>
</dbReference>
<dbReference type="InterPro" id="IPR034704">
    <property type="entry name" value="Ribosomal_bL28/bL31-like_sf"/>
</dbReference>
<dbReference type="InterPro" id="IPR002150">
    <property type="entry name" value="Ribosomal_bL31"/>
</dbReference>
<dbReference type="InterPro" id="IPR027491">
    <property type="entry name" value="Ribosomal_bL31_A"/>
</dbReference>
<dbReference type="InterPro" id="IPR042105">
    <property type="entry name" value="Ribosomal_bL31_sf"/>
</dbReference>
<dbReference type="NCBIfam" id="TIGR00105">
    <property type="entry name" value="L31"/>
    <property type="match status" value="1"/>
</dbReference>
<dbReference type="NCBIfam" id="NF001809">
    <property type="entry name" value="PRK00528.1"/>
    <property type="match status" value="1"/>
</dbReference>
<dbReference type="PANTHER" id="PTHR33280">
    <property type="entry name" value="50S RIBOSOMAL PROTEIN L31, CHLOROPLASTIC"/>
    <property type="match status" value="1"/>
</dbReference>
<dbReference type="PANTHER" id="PTHR33280:SF6">
    <property type="entry name" value="LARGE RIBOSOMAL SUBUNIT PROTEIN BL31A"/>
    <property type="match status" value="1"/>
</dbReference>
<dbReference type="Pfam" id="PF01197">
    <property type="entry name" value="Ribosomal_L31"/>
    <property type="match status" value="1"/>
</dbReference>
<dbReference type="PRINTS" id="PR01249">
    <property type="entry name" value="RIBOSOMALL31"/>
</dbReference>
<dbReference type="SUPFAM" id="SSF143800">
    <property type="entry name" value="L28p-like"/>
    <property type="match status" value="1"/>
</dbReference>
<dbReference type="PROSITE" id="PS01143">
    <property type="entry name" value="RIBOSOMAL_L31"/>
    <property type="match status" value="1"/>
</dbReference>
<evidence type="ECO:0000255" key="1">
    <source>
        <dbReference type="HAMAP-Rule" id="MF_00501"/>
    </source>
</evidence>
<evidence type="ECO:0000305" key="2"/>
<keyword id="KW-1185">Reference proteome</keyword>
<keyword id="KW-0687">Ribonucleoprotein</keyword>
<keyword id="KW-0689">Ribosomal protein</keyword>
<keyword id="KW-0694">RNA-binding</keyword>
<keyword id="KW-0699">rRNA-binding</keyword>
<sequence length="76" mass="8538">MKADIHPQYHLIKVVMTDGTEFQTRSTYGEEGATLNLDIDPKTHPAWTGGTQQLLDRGGRLSRFNSRFGNLSFGKK</sequence>
<organism>
    <name type="scientific">Beijerinckia indica subsp. indica (strain ATCC 9039 / DSM 1715 / NCIMB 8712)</name>
    <dbReference type="NCBI Taxonomy" id="395963"/>
    <lineage>
        <taxon>Bacteria</taxon>
        <taxon>Pseudomonadati</taxon>
        <taxon>Pseudomonadota</taxon>
        <taxon>Alphaproteobacteria</taxon>
        <taxon>Hyphomicrobiales</taxon>
        <taxon>Beijerinckiaceae</taxon>
        <taxon>Beijerinckia</taxon>
    </lineage>
</organism>
<reference key="1">
    <citation type="journal article" date="2010" name="J. Bacteriol.">
        <title>Complete genome sequence of Beijerinckia indica subsp. indica.</title>
        <authorList>
            <person name="Tamas I."/>
            <person name="Dedysh S.N."/>
            <person name="Liesack W."/>
            <person name="Stott M.B."/>
            <person name="Alam M."/>
            <person name="Murrell J.C."/>
            <person name="Dunfield P.F."/>
        </authorList>
    </citation>
    <scope>NUCLEOTIDE SEQUENCE [LARGE SCALE GENOMIC DNA]</scope>
    <source>
        <strain>ATCC 9039 / DSM 1715 / NCIMB 8712</strain>
    </source>
</reference>
<gene>
    <name evidence="1" type="primary">rpmE</name>
    <name type="ordered locus">Bind_0261</name>
</gene>
<proteinExistence type="inferred from homology"/>
<accession>B2ICM8</accession>
<name>RL31_BEII9</name>
<protein>
    <recommendedName>
        <fullName evidence="1">Large ribosomal subunit protein bL31</fullName>
    </recommendedName>
    <alternativeName>
        <fullName evidence="2">50S ribosomal protein L31</fullName>
    </alternativeName>
</protein>
<feature type="chain" id="PRO_1000126567" description="Large ribosomal subunit protein bL31">
    <location>
        <begin position="1"/>
        <end position="76"/>
    </location>
</feature>